<evidence type="ECO:0000250" key="1"/>
<evidence type="ECO:0000255" key="2">
    <source>
        <dbReference type="HAMAP-Rule" id="MF_00075"/>
    </source>
</evidence>
<dbReference type="EMBL" id="AF115283">
    <property type="protein sequence ID" value="AAD40605.1"/>
    <property type="molecule type" value="Genomic_DNA"/>
</dbReference>
<dbReference type="EMBL" id="AE010300">
    <property type="protein sequence ID" value="AAN47960.1"/>
    <property type="molecule type" value="Genomic_DNA"/>
</dbReference>
<dbReference type="RefSeq" id="NP_710942.1">
    <property type="nucleotide sequence ID" value="NC_004342.2"/>
</dbReference>
<dbReference type="RefSeq" id="WP_001040194.1">
    <property type="nucleotide sequence ID" value="NC_004342.2"/>
</dbReference>
<dbReference type="SMR" id="Q9XD14"/>
<dbReference type="FunCoup" id="Q9XD14">
    <property type="interactions" value="388"/>
</dbReference>
<dbReference type="STRING" id="189518.LA_0761"/>
<dbReference type="PaxDb" id="189518-LA_0761"/>
<dbReference type="EnsemblBacteria" id="AAN47960">
    <property type="protein sequence ID" value="AAN47960"/>
    <property type="gene ID" value="LA_0761"/>
</dbReference>
<dbReference type="GeneID" id="34315486"/>
<dbReference type="KEGG" id="lil:LA_0761"/>
<dbReference type="PATRIC" id="fig|189518.3.peg.767"/>
<dbReference type="HOGENOM" id="CLU_151267_1_0_12"/>
<dbReference type="InParanoid" id="Q9XD14"/>
<dbReference type="OrthoDB" id="9803250at2"/>
<dbReference type="PRO" id="PR:Q9XD14"/>
<dbReference type="Proteomes" id="UP000001408">
    <property type="component" value="Chromosome I"/>
</dbReference>
<dbReference type="GO" id="GO:0005829">
    <property type="term" value="C:cytosol"/>
    <property type="evidence" value="ECO:0000318"/>
    <property type="project" value="GO_Central"/>
</dbReference>
<dbReference type="GO" id="GO:0043022">
    <property type="term" value="F:ribosome binding"/>
    <property type="evidence" value="ECO:0000318"/>
    <property type="project" value="GO_Central"/>
</dbReference>
<dbReference type="GO" id="GO:0019843">
    <property type="term" value="F:rRNA binding"/>
    <property type="evidence" value="ECO:0007669"/>
    <property type="project" value="UniProtKB-UniRule"/>
</dbReference>
<dbReference type="GO" id="GO:0003743">
    <property type="term" value="F:translation initiation factor activity"/>
    <property type="evidence" value="ECO:0007669"/>
    <property type="project" value="UniProtKB-UniRule"/>
</dbReference>
<dbReference type="CDD" id="cd04451">
    <property type="entry name" value="S1_IF1"/>
    <property type="match status" value="1"/>
</dbReference>
<dbReference type="FunFam" id="2.40.50.140:FF:000002">
    <property type="entry name" value="Translation initiation factor IF-1"/>
    <property type="match status" value="1"/>
</dbReference>
<dbReference type="Gene3D" id="2.40.50.140">
    <property type="entry name" value="Nucleic acid-binding proteins"/>
    <property type="match status" value="1"/>
</dbReference>
<dbReference type="HAMAP" id="MF_00075">
    <property type="entry name" value="IF_1"/>
    <property type="match status" value="1"/>
</dbReference>
<dbReference type="InterPro" id="IPR012340">
    <property type="entry name" value="NA-bd_OB-fold"/>
</dbReference>
<dbReference type="InterPro" id="IPR006196">
    <property type="entry name" value="RNA-binding_domain_S1_IF1"/>
</dbReference>
<dbReference type="InterPro" id="IPR003029">
    <property type="entry name" value="S1_domain"/>
</dbReference>
<dbReference type="InterPro" id="IPR004368">
    <property type="entry name" value="TIF_IF1"/>
</dbReference>
<dbReference type="NCBIfam" id="TIGR00008">
    <property type="entry name" value="infA"/>
    <property type="match status" value="1"/>
</dbReference>
<dbReference type="PANTHER" id="PTHR33370">
    <property type="entry name" value="TRANSLATION INITIATION FACTOR IF-1, CHLOROPLASTIC"/>
    <property type="match status" value="1"/>
</dbReference>
<dbReference type="PANTHER" id="PTHR33370:SF1">
    <property type="entry name" value="TRANSLATION INITIATION FACTOR IF-1, CHLOROPLASTIC"/>
    <property type="match status" value="1"/>
</dbReference>
<dbReference type="Pfam" id="PF01176">
    <property type="entry name" value="eIF-1a"/>
    <property type="match status" value="1"/>
</dbReference>
<dbReference type="SMART" id="SM00316">
    <property type="entry name" value="S1"/>
    <property type="match status" value="1"/>
</dbReference>
<dbReference type="SUPFAM" id="SSF50249">
    <property type="entry name" value="Nucleic acid-binding proteins"/>
    <property type="match status" value="1"/>
</dbReference>
<dbReference type="PROSITE" id="PS50832">
    <property type="entry name" value="S1_IF1_TYPE"/>
    <property type="match status" value="1"/>
</dbReference>
<name>IF1_LEPIN</name>
<protein>
    <recommendedName>
        <fullName evidence="2">Translation initiation factor IF-1</fullName>
    </recommendedName>
</protein>
<gene>
    <name evidence="2" type="primary">infA</name>
    <name type="ordered locus">LA_0761</name>
</gene>
<comment type="function">
    <text evidence="2">One of the essential components for the initiation of protein synthesis. Stabilizes the binding of IF-2 and IF-3 on the 30S subunit to which N-formylmethionyl-tRNA(fMet) subsequently binds. Helps modulate mRNA selection, yielding the 30S pre-initiation complex (PIC). Upon addition of the 50S ribosomal subunit IF-1, IF-2 and IF-3 are released leaving the mature 70S translation initiation complex.</text>
</comment>
<comment type="subunit">
    <text evidence="2">Component of the 30S ribosomal translation pre-initiation complex which assembles on the 30S ribosome in the order IF-2 and IF-3, IF-1 and N-formylmethionyl-tRNA(fMet); mRNA recruitment can occur at any time during PIC assembly.</text>
</comment>
<comment type="subcellular location">
    <subcellularLocation>
        <location evidence="2">Cytoplasm</location>
    </subcellularLocation>
</comment>
<comment type="similarity">
    <text evidence="2">Belongs to the IF-1 family.</text>
</comment>
<feature type="initiator methionine" description="Removed" evidence="1">
    <location>
        <position position="1"/>
    </location>
</feature>
<feature type="chain" id="PRO_0000095812" description="Translation initiation factor IF-1">
    <location>
        <begin position="2"/>
        <end position="72"/>
    </location>
</feature>
<feature type="domain" description="S1-like" evidence="2">
    <location>
        <begin position="2"/>
        <end position="72"/>
    </location>
</feature>
<sequence length="72" mass="8194">MAKEEAITVDGTVLEPLPNAMFRVELENGHKVLAHISGKMRMHYIRILPGDKVTVELSPYDLSKGRITYRKK</sequence>
<keyword id="KW-0963">Cytoplasm</keyword>
<keyword id="KW-0396">Initiation factor</keyword>
<keyword id="KW-0648">Protein biosynthesis</keyword>
<keyword id="KW-1185">Reference proteome</keyword>
<keyword id="KW-0694">RNA-binding</keyword>
<keyword id="KW-0699">rRNA-binding</keyword>
<accession>Q9XD14</accession>
<proteinExistence type="inferred from homology"/>
<organism>
    <name type="scientific">Leptospira interrogans serogroup Icterohaemorrhagiae serovar Lai (strain 56601)</name>
    <dbReference type="NCBI Taxonomy" id="189518"/>
    <lineage>
        <taxon>Bacteria</taxon>
        <taxon>Pseudomonadati</taxon>
        <taxon>Spirochaetota</taxon>
        <taxon>Spirochaetia</taxon>
        <taxon>Leptospirales</taxon>
        <taxon>Leptospiraceae</taxon>
        <taxon>Leptospira</taxon>
    </lineage>
</organism>
<reference key="1">
    <citation type="journal article" date="2000" name="FEMS Microbiol. Lett.">
        <title>Characterization of the Leptospira interrogans S10-spc-alpha operon.</title>
        <authorList>
            <person name="Zuerner R.L."/>
            <person name="Hartskeerl R.A."/>
            <person name="van de Kemp H."/>
            <person name="Bal A.E."/>
        </authorList>
    </citation>
    <scope>NUCLEOTIDE SEQUENCE [GENOMIC DNA]</scope>
    <source>
        <strain>Lai / Serogroup Icterohaemorrhagiae / Serovar lai</strain>
    </source>
</reference>
<reference key="2">
    <citation type="journal article" date="2003" name="Nature">
        <title>Unique physiological and pathogenic features of Leptospira interrogans revealed by whole-genome sequencing.</title>
        <authorList>
            <person name="Ren S.-X."/>
            <person name="Fu G."/>
            <person name="Jiang X.-G."/>
            <person name="Zeng R."/>
            <person name="Miao Y.-G."/>
            <person name="Xu H."/>
            <person name="Zhang Y.-X."/>
            <person name="Xiong H."/>
            <person name="Lu G."/>
            <person name="Lu L.-F."/>
            <person name="Jiang H.-Q."/>
            <person name="Jia J."/>
            <person name="Tu Y.-F."/>
            <person name="Jiang J.-X."/>
            <person name="Gu W.-Y."/>
            <person name="Zhang Y.-Q."/>
            <person name="Cai Z."/>
            <person name="Sheng H.-H."/>
            <person name="Yin H.-F."/>
            <person name="Zhang Y."/>
            <person name="Zhu G.-F."/>
            <person name="Wan M."/>
            <person name="Huang H.-L."/>
            <person name="Qian Z."/>
            <person name="Wang S.-Y."/>
            <person name="Ma W."/>
            <person name="Yao Z.-J."/>
            <person name="Shen Y."/>
            <person name="Qiang B.-Q."/>
            <person name="Xia Q.-C."/>
            <person name="Guo X.-K."/>
            <person name="Danchin A."/>
            <person name="Saint Girons I."/>
            <person name="Somerville R.L."/>
            <person name="Wen Y.-M."/>
            <person name="Shi M.-H."/>
            <person name="Chen Z."/>
            <person name="Xu J.-G."/>
            <person name="Zhao G.-P."/>
        </authorList>
    </citation>
    <scope>NUCLEOTIDE SEQUENCE [LARGE SCALE GENOMIC DNA]</scope>
    <source>
        <strain>56601</strain>
    </source>
</reference>